<feature type="chain" id="PRO_0000114432" description="3-hydroxy-3-methylglutaryl-coenzyme A reductase">
    <location>
        <begin position="1"/>
        <end position="948"/>
    </location>
</feature>
<feature type="transmembrane region" description="Helical" evidence="2">
    <location>
        <begin position="9"/>
        <end position="25"/>
    </location>
</feature>
<feature type="transmembrane region" description="Helical" evidence="2">
    <location>
        <begin position="55"/>
        <end position="71"/>
    </location>
</feature>
<feature type="transmembrane region" description="Helical" evidence="2">
    <location>
        <begin position="96"/>
        <end position="112"/>
    </location>
</feature>
<feature type="transmembrane region" description="Helical" evidence="2">
    <location>
        <begin position="124"/>
        <end position="140"/>
    </location>
</feature>
<feature type="transmembrane region" description="Helical" evidence="2">
    <location>
        <begin position="207"/>
        <end position="223"/>
    </location>
</feature>
<feature type="transmembrane region" description="Helical" evidence="2">
    <location>
        <begin position="286"/>
        <end position="302"/>
    </location>
</feature>
<feature type="transmembrane region" description="Helical" evidence="2">
    <location>
        <begin position="347"/>
        <end position="363"/>
    </location>
</feature>
<feature type="region of interest" description="Linker">
    <location>
        <begin position="364"/>
        <end position="466"/>
    </location>
</feature>
<feature type="region of interest" description="Catalytic">
    <location>
        <begin position="467"/>
        <end position="948"/>
    </location>
</feature>
<feature type="active site" description="Charge relay system" evidence="1">
    <location>
        <position position="567"/>
    </location>
</feature>
<feature type="active site" description="Charge relay system" evidence="1">
    <location>
        <position position="699"/>
    </location>
</feature>
<feature type="active site" description="Charge relay system" evidence="1">
    <location>
        <position position="777"/>
    </location>
</feature>
<feature type="active site" description="Proton donor" evidence="3">
    <location>
        <position position="869"/>
    </location>
</feature>
<feature type="glycosylation site" description="N-linked (GlcNAc...) asparagine" evidence="2">
    <location>
        <position position="316"/>
    </location>
</feature>
<feature type="glycosylation site" description="N-linked (GlcNAc...) asparagine" evidence="2">
    <location>
        <position position="430"/>
    </location>
</feature>
<feature type="glycosylation site" description="N-linked (GlcNAc...) asparagine" evidence="2">
    <location>
        <position position="895"/>
    </location>
</feature>
<evidence type="ECO:0000250" key="1"/>
<evidence type="ECO:0000255" key="2"/>
<evidence type="ECO:0000255" key="3">
    <source>
        <dbReference type="PROSITE-ProRule" id="PRU10003"/>
    </source>
</evidence>
<evidence type="ECO:0000305" key="4"/>
<reference key="1">
    <citation type="journal article" date="1989" name="Proc. Natl. Acad. Sci. U.S.A.">
        <title>Molecular cloning and sequence analysis of 3-hydroxy-3-methylglutaryl-coenzyme A reductase from the human parasite Schistosoma mansoni.</title>
        <authorList>
            <person name="Rajkovic A."/>
            <person name="Simonsen J.N."/>
            <person name="Davis R.E."/>
            <person name="Rottman F.M."/>
        </authorList>
    </citation>
    <scope>NUCLEOTIDE SEQUENCE [MRNA]</scope>
</reference>
<reference key="2">
    <citation type="journal article" date="1995" name="J. Biol. Chem.">
        <title>RNA trans-splicing in flatworms. Analysis of trans-spliced mRNAs and genes in the human parasite, Schistosoma mansoni.</title>
        <authorList>
            <person name="Davis R.E."/>
            <person name="Hardwick C."/>
            <person name="Tavernier P."/>
            <person name="Hodgson S."/>
            <person name="Singh H."/>
        </authorList>
    </citation>
    <scope>NUCLEOTIDE SEQUENCE [GENOMIC DNA] OF 1-236</scope>
    <source>
        <strain>Puerto Rican</strain>
    </source>
</reference>
<protein>
    <recommendedName>
        <fullName>3-hydroxy-3-methylglutaryl-coenzyme A reductase</fullName>
        <shortName>HMG-CoA reductase</shortName>
        <ecNumber>1.1.1.34</ecNumber>
    </recommendedName>
</protein>
<dbReference type="EC" id="1.1.1.34"/>
<dbReference type="EMBL" id="M27294">
    <property type="protein sequence ID" value="AAA29896.1"/>
    <property type="molecule type" value="mRNA"/>
</dbReference>
<dbReference type="EMBL" id="AH006565">
    <property type="protein sequence ID" value="AAC46885.1"/>
    <property type="molecule type" value="Genomic_DNA"/>
</dbReference>
<dbReference type="PIR" id="A34416">
    <property type="entry name" value="A34416"/>
</dbReference>
<dbReference type="SMR" id="P16237"/>
<dbReference type="STRING" id="6183.P16237"/>
<dbReference type="EnsemblMetazoa" id="Smp_138590.1">
    <property type="protein sequence ID" value="Smp_138590.1"/>
    <property type="gene ID" value="Smp_138590"/>
</dbReference>
<dbReference type="WBParaSite" id="Smp_138590.1">
    <property type="protein sequence ID" value="Smp_138590.1"/>
    <property type="gene ID" value="Smp_138590"/>
</dbReference>
<dbReference type="eggNOG" id="KOG2480">
    <property type="taxonomic scope" value="Eukaryota"/>
</dbReference>
<dbReference type="InParanoid" id="P16237"/>
<dbReference type="UniPathway" id="UPA00058">
    <property type="reaction ID" value="UER00103"/>
</dbReference>
<dbReference type="Proteomes" id="UP000008854">
    <property type="component" value="Unassembled WGS sequence"/>
</dbReference>
<dbReference type="ExpressionAtlas" id="P16237">
    <property type="expression patterns" value="baseline"/>
</dbReference>
<dbReference type="GO" id="GO:0005789">
    <property type="term" value="C:endoplasmic reticulum membrane"/>
    <property type="evidence" value="ECO:0007669"/>
    <property type="project" value="UniProtKB-SubCell"/>
</dbReference>
<dbReference type="GO" id="GO:0005778">
    <property type="term" value="C:peroxisomal membrane"/>
    <property type="evidence" value="ECO:0007669"/>
    <property type="project" value="UniProtKB-SubCell"/>
</dbReference>
<dbReference type="GO" id="GO:0004420">
    <property type="term" value="F:hydroxymethylglutaryl-CoA reductase (NADPH) activity"/>
    <property type="evidence" value="ECO:0007669"/>
    <property type="project" value="UniProtKB-EC"/>
</dbReference>
<dbReference type="GO" id="GO:0006695">
    <property type="term" value="P:cholesterol biosynthetic process"/>
    <property type="evidence" value="ECO:0007669"/>
    <property type="project" value="UniProtKB-KW"/>
</dbReference>
<dbReference type="GO" id="GO:0015936">
    <property type="term" value="P:coenzyme A metabolic process"/>
    <property type="evidence" value="ECO:0007669"/>
    <property type="project" value="InterPro"/>
</dbReference>
<dbReference type="GO" id="GO:0008299">
    <property type="term" value="P:isoprenoid biosynthetic process"/>
    <property type="evidence" value="ECO:0007669"/>
    <property type="project" value="InterPro"/>
</dbReference>
<dbReference type="CDD" id="cd00643">
    <property type="entry name" value="HMG-CoA_reductase_classI"/>
    <property type="match status" value="1"/>
</dbReference>
<dbReference type="FunFam" id="3.30.70.420:FF:000001">
    <property type="entry name" value="3-hydroxy-3-methylglutaryl coenzyme A reductase"/>
    <property type="match status" value="1"/>
</dbReference>
<dbReference type="Gene3D" id="3.90.770.10">
    <property type="entry name" value="3-hydroxy-3-methylglutaryl-coenzyme A Reductase, Chain A, domain 2"/>
    <property type="match status" value="1"/>
</dbReference>
<dbReference type="Gene3D" id="1.10.3270.10">
    <property type="entry name" value="HMGR, N-terminal domain"/>
    <property type="match status" value="1"/>
</dbReference>
<dbReference type="Gene3D" id="3.30.70.420">
    <property type="entry name" value="Hydroxymethylglutaryl-CoA reductase, class I/II, NAD/NADP-binding domain"/>
    <property type="match status" value="1"/>
</dbReference>
<dbReference type="InterPro" id="IPR002202">
    <property type="entry name" value="HMG_CoA_Rdtase"/>
</dbReference>
<dbReference type="InterPro" id="IPR023074">
    <property type="entry name" value="HMG_CoA_Rdtase_cat_sf"/>
</dbReference>
<dbReference type="InterPro" id="IPR023076">
    <property type="entry name" value="HMG_CoA_Rdtase_CS"/>
</dbReference>
<dbReference type="InterPro" id="IPR004554">
    <property type="entry name" value="HMG_CoA_Rdtase_eu_arc"/>
</dbReference>
<dbReference type="InterPro" id="IPR023282">
    <property type="entry name" value="HMG_CoA_Rdtase_N"/>
</dbReference>
<dbReference type="InterPro" id="IPR009023">
    <property type="entry name" value="HMG_CoA_Rdtase_NAD(P)-bd_sf"/>
</dbReference>
<dbReference type="InterPro" id="IPR009029">
    <property type="entry name" value="HMG_CoA_Rdtase_sub-bd_dom_sf"/>
</dbReference>
<dbReference type="NCBIfam" id="TIGR00533">
    <property type="entry name" value="HMG_CoA_R_NADP"/>
    <property type="match status" value="1"/>
</dbReference>
<dbReference type="PANTHER" id="PTHR10572">
    <property type="entry name" value="3-HYDROXY-3-METHYLGLUTARYL-COENZYME A REDUCTASE"/>
    <property type="match status" value="1"/>
</dbReference>
<dbReference type="PANTHER" id="PTHR10572:SF24">
    <property type="entry name" value="3-HYDROXY-3-METHYLGLUTARYL-COENZYME A REDUCTASE"/>
    <property type="match status" value="1"/>
</dbReference>
<dbReference type="Pfam" id="PF00368">
    <property type="entry name" value="HMG-CoA_red"/>
    <property type="match status" value="1"/>
</dbReference>
<dbReference type="PRINTS" id="PR00071">
    <property type="entry name" value="HMGCOARDTASE"/>
</dbReference>
<dbReference type="SUPFAM" id="SSF55035">
    <property type="entry name" value="NAD-binding domain of HMG-CoA reductase"/>
    <property type="match status" value="1"/>
</dbReference>
<dbReference type="SUPFAM" id="SSF56542">
    <property type="entry name" value="Substrate-binding domain of HMG-CoA reductase"/>
    <property type="match status" value="1"/>
</dbReference>
<dbReference type="PROSITE" id="PS00066">
    <property type="entry name" value="HMG_COA_REDUCTASE_1"/>
    <property type="match status" value="1"/>
</dbReference>
<dbReference type="PROSITE" id="PS00318">
    <property type="entry name" value="HMG_COA_REDUCTASE_2"/>
    <property type="match status" value="1"/>
</dbReference>
<dbReference type="PROSITE" id="PS01192">
    <property type="entry name" value="HMG_COA_REDUCTASE_3"/>
    <property type="match status" value="1"/>
</dbReference>
<dbReference type="PROSITE" id="PS50065">
    <property type="entry name" value="HMG_COA_REDUCTASE_4"/>
    <property type="match status" value="1"/>
</dbReference>
<organism>
    <name type="scientific">Schistosoma mansoni</name>
    <name type="common">Blood fluke</name>
    <dbReference type="NCBI Taxonomy" id="6183"/>
    <lineage>
        <taxon>Eukaryota</taxon>
        <taxon>Metazoa</taxon>
        <taxon>Spiralia</taxon>
        <taxon>Lophotrochozoa</taxon>
        <taxon>Platyhelminthes</taxon>
        <taxon>Trematoda</taxon>
        <taxon>Digenea</taxon>
        <taxon>Strigeidida</taxon>
        <taxon>Schistosomatoidea</taxon>
        <taxon>Schistosomatidae</taxon>
        <taxon>Schistosoma</taxon>
    </lineage>
</organism>
<name>HMDH_SCHMA</name>
<keyword id="KW-0152">Cholesterol biosynthesis</keyword>
<keyword id="KW-0153">Cholesterol metabolism</keyword>
<keyword id="KW-0256">Endoplasmic reticulum</keyword>
<keyword id="KW-0325">Glycoprotein</keyword>
<keyword id="KW-0444">Lipid biosynthesis</keyword>
<keyword id="KW-0443">Lipid metabolism</keyword>
<keyword id="KW-0472">Membrane</keyword>
<keyword id="KW-0521">NADP</keyword>
<keyword id="KW-0560">Oxidoreductase</keyword>
<keyword id="KW-0576">Peroxisome</keyword>
<keyword id="KW-1185">Reference proteome</keyword>
<keyword id="KW-0752">Steroid biosynthesis</keyword>
<keyword id="KW-0753">Steroid metabolism</keyword>
<keyword id="KW-0756">Sterol biosynthesis</keyword>
<keyword id="KW-1207">Sterol metabolism</keyword>
<keyword id="KW-0812">Transmembrane</keyword>
<keyword id="KW-1133">Transmembrane helix</keyword>
<proteinExistence type="evidence at transcript level"/>
<sequence length="948" mass="107045">MLKILNTVLLFFDCFSTGTFFVLLIYLFTRLRTHLLHFSSSNCHLDVIIYQSRAVIIFLVVFVYFIGVLTCKINDKILVHTMLRNKRQLNTLFYTLILFTFALCSLSSVLFVPYTSFAIFLLSTSVFLLFSDLSVFFIVLEYYLLEIELVNYEHAKRHCLLSHLFSNQLFVDHMLGMFLKTSLFSISTTSKYAYLESIFKCTLMEQIIYIMIVFVFLPSFMRIFASYAKRMYGEQKKCLVSNKGVSSSTRKRRHSYSSGHSYVEYRRMSVHNLIGYVVNPNCHYKCWSTTFVIFVSLIILHLNNRYSERISSFKHNSSENEVFPVLYHITAYEVTSIFHFIYNIFHVINANLVVYLFLGLFLFKRIRLNKPINSQLRNLNIPKIKETLISDQVKQSPVLPKFSKKLNDIPLQSRKRIYCLHKDDDYIDRNDSSSVSTFSNTCKNSNERPSNVLDLDMLTEKIKQGLGHELSDTEILQLLSHGRLKTRELESVVRNPFRAVELRRLDLSTFLNNPHIIERIPYKDYDYRLVYGQCCEEVIGYMPIPVGKIGPLLLDGRSHYIPLATTEGCLVASTNRGCRAIFLAGGIKSVVYRDQMTRAPVVWFPSIIDSVKCIAWIDSEEGFQTLKSAFDKTSAHVNLLSVFACPAGRYIHIRFAARTGDAMGMNMVSKATDSALHCLKKYFSNMQVISLSGNMCTDKKPATINTILGRGKSVIAEAHLSADVLAQVLHTNAQRLARLTHSKNWIGSAMAGCPGMMGCNAHAANIIAGMFAATGQDLAQVVDSSSCLTQLEVDLSDDSLVASVTMPCLEVGTVGGGTRLSGQRACLDLLDLSVDRPTEHLSRIIAGTVLAAELSLMAALDTDDLVKAHMHFNRAKQSTNSHSCSHSTTTDNNDNISNIYDNHNVALSSKIPVTDNSDIRESVHSLHVKPFPVKSDLSVNPEISHYTM</sequence>
<comment type="function">
    <text>This transmembrane glycoprotein is involved in the control of cholesterol and nonsterol isoprenoid compounds biosynthesis. It is the rate-limiting enzyme of sterol biosynthesis.</text>
</comment>
<comment type="catalytic activity">
    <reaction evidence="3">
        <text>(R)-mevalonate + 2 NADP(+) + CoA = (3S)-3-hydroxy-3-methylglutaryl-CoA + 2 NADPH + 2 H(+)</text>
        <dbReference type="Rhea" id="RHEA:15989"/>
        <dbReference type="ChEBI" id="CHEBI:15378"/>
        <dbReference type="ChEBI" id="CHEBI:36464"/>
        <dbReference type="ChEBI" id="CHEBI:43074"/>
        <dbReference type="ChEBI" id="CHEBI:57287"/>
        <dbReference type="ChEBI" id="CHEBI:57783"/>
        <dbReference type="ChEBI" id="CHEBI:58349"/>
        <dbReference type="EC" id="1.1.1.34"/>
    </reaction>
</comment>
<comment type="pathway">
    <text>Metabolic intermediate biosynthesis; (R)-mevalonate biosynthesis; (R)-mevalonate from acetyl-CoA: step 3/3.</text>
</comment>
<comment type="subcellular location">
    <subcellularLocation>
        <location>Endoplasmic reticulum membrane</location>
        <topology>Multi-pass membrane protein</topology>
    </subcellularLocation>
    <subcellularLocation>
        <location>Peroxisome membrane</location>
        <topology>Multi-pass membrane protein</topology>
    </subcellularLocation>
</comment>
<comment type="similarity">
    <text evidence="4">Belongs to the HMG-CoA reductase family.</text>
</comment>
<accession>P16237</accession>